<gene>
    <name evidence="6" type="primary">phomQ2</name>
</gene>
<sequence>MDNVGCEASSSRDPKGKKAVGFSPKLRVDKDCARWGNENVEEQTIGTQPTWRNHQHQTSRIRGFICATIIFVVCLGALSYIYRVDVSTTMLSTNQMNESHTAQCKNPPTRREWRGLTTGEKQEFTRSVNCLSRVPSKWGLNGTLYDDFSALHGGIGSWSHRSSSFLPWHRNALYVWEAALREHCGFNGQIPYWDWTMDWMNLANSSIWDSTEGFGGDGEVGGPITVGEGRCVVDGPFTDLRPIKYNHTYVQHCLSRGFRDNGTLGHMSGLPFRPEIIGEVRRKETFVDFEAAVEMHLHNAMHLAISGDFLALTAANDPIFYVHHAQMDHLWWQWQQENRERRLFEYNGKHMHNSTGHDASLDSMLVYGGFTEDIPVSEVMDTEKGKLCYRY</sequence>
<evidence type="ECO:0000250" key="1">
    <source>
        <dbReference type="UniProtKB" id="Q9ZP19"/>
    </source>
</evidence>
<evidence type="ECO:0000255" key="2"/>
<evidence type="ECO:0000255" key="3">
    <source>
        <dbReference type="PROSITE-ProRule" id="PRU00498"/>
    </source>
</evidence>
<evidence type="ECO:0000256" key="4">
    <source>
        <dbReference type="SAM" id="MobiDB-lite"/>
    </source>
</evidence>
<evidence type="ECO:0000269" key="5">
    <source>
    </source>
</evidence>
<evidence type="ECO:0000303" key="6">
    <source>
    </source>
</evidence>
<evidence type="ECO:0000305" key="7"/>
<evidence type="ECO:0000305" key="8">
    <source>
    </source>
</evidence>
<feature type="chain" id="PRO_0000458350" description="Tyrosinase-like protein phomQ2">
    <location>
        <begin position="1"/>
        <end position="391"/>
    </location>
</feature>
<feature type="transmembrane region" description="Helical" evidence="2">
    <location>
        <begin position="61"/>
        <end position="81"/>
    </location>
</feature>
<feature type="region of interest" description="Disordered" evidence="4">
    <location>
        <begin position="1"/>
        <end position="21"/>
    </location>
</feature>
<feature type="binding site" evidence="1">
    <location>
        <position position="160"/>
    </location>
    <ligand>
        <name>Cu cation</name>
        <dbReference type="ChEBI" id="CHEBI:23378"/>
        <label>A</label>
    </ligand>
</feature>
<feature type="binding site" evidence="1">
    <location>
        <position position="169"/>
    </location>
    <ligand>
        <name>Cu cation</name>
        <dbReference type="ChEBI" id="CHEBI:23378"/>
        <label>A</label>
    </ligand>
</feature>
<feature type="binding site" evidence="1">
    <location>
        <position position="298"/>
    </location>
    <ligand>
        <name>Cu cation</name>
        <dbReference type="ChEBI" id="CHEBI:23378"/>
        <label>B</label>
    </ligand>
</feature>
<feature type="binding site" evidence="1">
    <location>
        <position position="324"/>
    </location>
    <ligand>
        <name>Cu cation</name>
        <dbReference type="ChEBI" id="CHEBI:23378"/>
        <label>B</label>
    </ligand>
</feature>
<feature type="glycosylation site" description="N-linked (GlcNAc...) asparagine" evidence="3">
    <location>
        <position position="97"/>
    </location>
</feature>
<feature type="glycosylation site" description="N-linked (GlcNAc...) asparagine" evidence="3">
    <location>
        <position position="141"/>
    </location>
</feature>
<feature type="glycosylation site" description="N-linked (GlcNAc...) asparagine" evidence="3">
    <location>
        <position position="204"/>
    </location>
</feature>
<feature type="glycosylation site" description="N-linked (GlcNAc...) asparagine" evidence="3">
    <location>
        <position position="246"/>
    </location>
</feature>
<feature type="glycosylation site" description="N-linked (GlcNAc...) asparagine" evidence="3">
    <location>
        <position position="261"/>
    </location>
</feature>
<feature type="glycosylation site" description="N-linked (GlcNAc...) asparagine" evidence="3">
    <location>
        <position position="353"/>
    </location>
</feature>
<proteinExistence type="inferred from homology"/>
<dbReference type="EC" id="1.14.18.-" evidence="8"/>
<dbReference type="EMBL" id="LC646903">
    <property type="protein sequence ID" value="BDA39150.1"/>
    <property type="molecule type" value="Genomic_DNA"/>
</dbReference>
<dbReference type="SMR" id="A0A8J9RRY2"/>
<dbReference type="GO" id="GO:0016020">
    <property type="term" value="C:membrane"/>
    <property type="evidence" value="ECO:0007669"/>
    <property type="project" value="UniProtKB-SubCell"/>
</dbReference>
<dbReference type="GO" id="GO:0046872">
    <property type="term" value="F:metal ion binding"/>
    <property type="evidence" value="ECO:0007669"/>
    <property type="project" value="UniProtKB-KW"/>
</dbReference>
<dbReference type="GO" id="GO:0004497">
    <property type="term" value="F:monooxygenase activity"/>
    <property type="evidence" value="ECO:0007669"/>
    <property type="project" value="UniProtKB-KW"/>
</dbReference>
<dbReference type="Gene3D" id="1.10.1280.10">
    <property type="entry name" value="Di-copper center containing domain from catechol oxidase"/>
    <property type="match status" value="1"/>
</dbReference>
<dbReference type="InterPro" id="IPR008922">
    <property type="entry name" value="Di-copper_centre_dom_sf"/>
</dbReference>
<dbReference type="InterPro" id="IPR050316">
    <property type="entry name" value="Tyrosinase/Hemocyanin"/>
</dbReference>
<dbReference type="InterPro" id="IPR002227">
    <property type="entry name" value="Tyrosinase_Cu-bd"/>
</dbReference>
<dbReference type="PANTHER" id="PTHR11474:SF127">
    <property type="entry name" value="TYROSINASE COPPER-BINDING DOMAIN-CONTAINING PROTEIN"/>
    <property type="match status" value="1"/>
</dbReference>
<dbReference type="PANTHER" id="PTHR11474">
    <property type="entry name" value="TYROSINASE FAMILY MEMBER"/>
    <property type="match status" value="1"/>
</dbReference>
<dbReference type="Pfam" id="PF00264">
    <property type="entry name" value="Tyrosinase"/>
    <property type="match status" value="1"/>
</dbReference>
<dbReference type="PRINTS" id="PR00092">
    <property type="entry name" value="TYROSINASE"/>
</dbReference>
<dbReference type="SUPFAM" id="SSF48056">
    <property type="entry name" value="Di-copper centre-containing domain"/>
    <property type="match status" value="1"/>
</dbReference>
<dbReference type="PROSITE" id="PS00497">
    <property type="entry name" value="TYROSINASE_1"/>
    <property type="match status" value="1"/>
</dbReference>
<dbReference type="PROSITE" id="PS00498">
    <property type="entry name" value="TYROSINASE_2"/>
    <property type="match status" value="1"/>
</dbReference>
<name>PHOQ2_DIALO</name>
<keyword id="KW-0186">Copper</keyword>
<keyword id="KW-0325">Glycoprotein</keyword>
<keyword id="KW-0472">Membrane</keyword>
<keyword id="KW-0479">Metal-binding</keyword>
<keyword id="KW-0503">Monooxygenase</keyword>
<keyword id="KW-0560">Oxidoreductase</keyword>
<keyword id="KW-0812">Transmembrane</keyword>
<keyword id="KW-1133">Transmembrane helix</keyword>
<accession>A0A8J9RRY2</accession>
<organism>
    <name type="scientific">Diaporthe leptostromiformis</name>
    <name type="common">Lupinosis disease fungus</name>
    <name type="synonym">Phomopsis leptostromiformis</name>
    <dbReference type="NCBI Taxonomy" id="291059"/>
    <lineage>
        <taxon>Eukaryota</taxon>
        <taxon>Fungi</taxon>
        <taxon>Dikarya</taxon>
        <taxon>Ascomycota</taxon>
        <taxon>Pezizomycotina</taxon>
        <taxon>Sordariomycetes</taxon>
        <taxon>Sordariomycetidae</taxon>
        <taxon>Diaporthales</taxon>
        <taxon>Diaporthaceae</taxon>
        <taxon>Diaporthe</taxon>
    </lineage>
</organism>
<protein>
    <recommendedName>
        <fullName evidence="6">Tyrosinase-like protein phomQ2</fullName>
        <ecNumber evidence="8">1.14.18.-</ecNumber>
    </recommendedName>
    <alternativeName>
        <fullName evidence="6">Phomopsin biosynthesis cluster protein R</fullName>
    </alternativeName>
</protein>
<comment type="function">
    <text evidence="5 8">Tyrosinase-like protein; part of the gene cluster that mediates the biosynthesis of the phomopsins, a group of hexapeptide mycotoxins which infects lupins and causes lupinosis disease in livestock (PubMed:34608734). Within the pathway, phomQ2 is involved in the generation of the common 13-membered macrocycle, possibly by catalyzing the hydroxylation of Tyr (PubMed:34608734). The pathway starts with the processing of the precursor phomA by several endopeptidases including kexin proteases as well as the cluster-specific S41 family peptidase phomP1 and the oligopeptidase phomG to produce 10 identical copies of the hexapeptide Tyr-Val-Ile-Pro-Ile-Asp. After being excised from the precursor peptide, the core peptides are cyclized and modified post-translationally by enzymes encoded within the gene cluster. The timing and order of proteolysis of the phomA precursor and PTMs are still unknown. Two tyrosinase-like enzymes, phomQ1 and phomQ2, catalyze the chlorination and hydroxylation of Tyr, respectively. PhomYb, is proposed to be involved in the construction of the macrocyclic structure. The other 4 ustYa family proteins may be involved in PTMs that generate the unique structure of phomopsin A. PhomYa is required for the hydroxylation of C-beta of Tyr. PhomYc, phomYd, and phomYe are responsible for the biosynthesis of 2,3-dehydroisoleucine (dIle), 2,3-dehydroaspartic acid (dAsp), and 3,4-dehydroproline (dPro), respectively. While dIle formation by phomYc is indispensable for the installation of dAsp by phomYd, the order of the other PTMs have not been elucidated yet. Most of the biosynthetic enzymes likely have broad substrate specificity, and thus, there might be a metabolic grid from a precursor to phomopsin A. The enzyme(s) responsible for the biosynthesis of 3,4-dehydrovaline (dVal) have also not been identified yet. Finally, phomM acts as an S-adenosylmethionine-dependent alpha-N-methyltransferase that catalyzes two successive N-methylation reactions, converting N-desmethyl-phomopsin A to phomopsin A and phomopsin A further to an N,N-dimethylated congener called phomopsin E (Probable).</text>
</comment>
<comment type="cofactor">
    <cofactor evidence="1">
        <name>Cu(2+)</name>
        <dbReference type="ChEBI" id="CHEBI:29036"/>
    </cofactor>
    <text evidence="1">Binds 2 copper ions per subunit.</text>
</comment>
<comment type="pathway">
    <text evidence="5">Mycotoxin biosynthesis.</text>
</comment>
<comment type="subcellular location">
    <subcellularLocation>
        <location evidence="2">Membrane</location>
        <topology evidence="2">Single-pass membrane protein</topology>
    </subcellularLocation>
</comment>
<comment type="disruption phenotype">
    <text evidence="5">Abolishes the formation of phomopsin A and related metabolites.</text>
</comment>
<comment type="similarity">
    <text evidence="7">Belongs to the tyrosinase family.</text>
</comment>
<reference key="1">
    <citation type="journal article" date="2021" name="Angew. Chem. Int. Ed.">
        <title>Biosynthetic studies of phomopsins unveil posttranslational installation of dehydroamino acids by ustYa family proteins.</title>
        <authorList>
            <person name="Sogahata K."/>
            <person name="Ozaki T."/>
            <person name="Igarashi Y."/>
            <person name="Naganuma Y."/>
            <person name="Liu C."/>
            <person name="Minami A."/>
            <person name="Oikawa H."/>
        </authorList>
    </citation>
    <scope>NUCLEOTIDE SEQUENCE [GENOMIC DNA]</scope>
    <scope>FUNCTION</scope>
    <scope>DISRUPTION PHENOTYPE</scope>
    <source>
        <strain>ATCC 26115 / IMI 115107 / C 1557</strain>
    </source>
</reference>